<proteinExistence type="inferred from homology"/>
<evidence type="ECO:0000255" key="1">
    <source>
        <dbReference type="HAMAP-Rule" id="MF_01342"/>
    </source>
</evidence>
<evidence type="ECO:0000305" key="2"/>
<reference key="1">
    <citation type="submission" date="2008-03" db="EMBL/GenBank/DDBJ databases">
        <title>Guizotia abyssinica chloroplast sequenced using Solexa.</title>
        <authorList>
            <person name="Kane N.C."/>
            <person name="Dempewolf H."/>
            <person name="Stewart M.L."/>
            <person name="Cronk Q."/>
            <person name="Rieseberrg L.H."/>
        </authorList>
    </citation>
    <scope>NUCLEOTIDE SEQUENCE [LARGE SCALE GENOMIC DNA]</scope>
    <source>
        <strain>cv. PI 508077</strain>
    </source>
</reference>
<protein>
    <recommendedName>
        <fullName evidence="1">Large ribosomal subunit protein uL16c</fullName>
    </recommendedName>
    <alternativeName>
        <fullName evidence="2">50S ribosomal protein L16, chloroplastic</fullName>
    </alternativeName>
</protein>
<feature type="chain" id="PRO_0000354636" description="Large ribosomal subunit protein uL16c">
    <location>
        <begin position="1"/>
        <end position="136"/>
    </location>
</feature>
<dbReference type="EMBL" id="EU549769">
    <property type="protein sequence ID" value="ACB86564.1"/>
    <property type="molecule type" value="Genomic_DNA"/>
</dbReference>
<dbReference type="RefSeq" id="YP_001837398.1">
    <property type="nucleotide sequence ID" value="NC_010601.1"/>
</dbReference>
<dbReference type="SMR" id="B2LMN1"/>
<dbReference type="GeneID" id="6219130"/>
<dbReference type="GO" id="GO:0009507">
    <property type="term" value="C:chloroplast"/>
    <property type="evidence" value="ECO:0007669"/>
    <property type="project" value="UniProtKB-SubCell"/>
</dbReference>
<dbReference type="GO" id="GO:0005762">
    <property type="term" value="C:mitochondrial large ribosomal subunit"/>
    <property type="evidence" value="ECO:0007669"/>
    <property type="project" value="TreeGrafter"/>
</dbReference>
<dbReference type="GO" id="GO:0019843">
    <property type="term" value="F:rRNA binding"/>
    <property type="evidence" value="ECO:0007669"/>
    <property type="project" value="InterPro"/>
</dbReference>
<dbReference type="GO" id="GO:0003735">
    <property type="term" value="F:structural constituent of ribosome"/>
    <property type="evidence" value="ECO:0007669"/>
    <property type="project" value="InterPro"/>
</dbReference>
<dbReference type="GO" id="GO:0032543">
    <property type="term" value="P:mitochondrial translation"/>
    <property type="evidence" value="ECO:0007669"/>
    <property type="project" value="TreeGrafter"/>
</dbReference>
<dbReference type="CDD" id="cd01433">
    <property type="entry name" value="Ribosomal_L16_L10e"/>
    <property type="match status" value="1"/>
</dbReference>
<dbReference type="FunFam" id="3.90.1170.10:FF:000001">
    <property type="entry name" value="50S ribosomal protein L16"/>
    <property type="match status" value="1"/>
</dbReference>
<dbReference type="Gene3D" id="3.90.1170.10">
    <property type="entry name" value="Ribosomal protein L10e/L16"/>
    <property type="match status" value="1"/>
</dbReference>
<dbReference type="HAMAP" id="MF_01342">
    <property type="entry name" value="Ribosomal_uL16"/>
    <property type="match status" value="1"/>
</dbReference>
<dbReference type="InterPro" id="IPR047873">
    <property type="entry name" value="Ribosomal_uL16"/>
</dbReference>
<dbReference type="InterPro" id="IPR000114">
    <property type="entry name" value="Ribosomal_uL16_bact-type"/>
</dbReference>
<dbReference type="InterPro" id="IPR020798">
    <property type="entry name" value="Ribosomal_uL16_CS"/>
</dbReference>
<dbReference type="InterPro" id="IPR016180">
    <property type="entry name" value="Ribosomal_uL16_dom"/>
</dbReference>
<dbReference type="InterPro" id="IPR036920">
    <property type="entry name" value="Ribosomal_uL16_sf"/>
</dbReference>
<dbReference type="NCBIfam" id="TIGR01164">
    <property type="entry name" value="rplP_bact"/>
    <property type="match status" value="1"/>
</dbReference>
<dbReference type="PANTHER" id="PTHR12220">
    <property type="entry name" value="50S/60S RIBOSOMAL PROTEIN L16"/>
    <property type="match status" value="1"/>
</dbReference>
<dbReference type="PANTHER" id="PTHR12220:SF13">
    <property type="entry name" value="LARGE RIBOSOMAL SUBUNIT PROTEIN UL16M"/>
    <property type="match status" value="1"/>
</dbReference>
<dbReference type="Pfam" id="PF00252">
    <property type="entry name" value="Ribosomal_L16"/>
    <property type="match status" value="1"/>
</dbReference>
<dbReference type="PRINTS" id="PR00060">
    <property type="entry name" value="RIBOSOMALL16"/>
</dbReference>
<dbReference type="SUPFAM" id="SSF54686">
    <property type="entry name" value="Ribosomal protein L16p/L10e"/>
    <property type="match status" value="1"/>
</dbReference>
<dbReference type="PROSITE" id="PS00586">
    <property type="entry name" value="RIBOSOMAL_L16_1"/>
    <property type="match status" value="1"/>
</dbReference>
<dbReference type="PROSITE" id="PS00701">
    <property type="entry name" value="RIBOSOMAL_L16_2"/>
    <property type="match status" value="1"/>
</dbReference>
<name>RK16_GUIAB</name>
<sequence length="136" mass="15424">MNYNPKRTRFRKQHRGRMKGISYRGNTICFGKYALQALEPAWITSRQIEAGRRAMTRNARRGGKIWVRIFPDKPVTVRPAETRMGSGKGSPEYWVAVVKPGRILYEMGGVTENIARRAISIAASKMPIRAQFIISG</sequence>
<accession>B2LMN1</accession>
<gene>
    <name evidence="1" type="primary">rpl16</name>
    <name type="ordered locus">GuabCp060</name>
</gene>
<comment type="subunit">
    <text evidence="1">Part of the 50S ribosomal subunit.</text>
</comment>
<comment type="subcellular location">
    <subcellularLocation>
        <location>Plastid</location>
        <location>Chloroplast</location>
    </subcellularLocation>
</comment>
<comment type="similarity">
    <text evidence="1">Belongs to the universal ribosomal protein uL16 family.</text>
</comment>
<organism>
    <name type="scientific">Guizotia abyssinica</name>
    <name type="common">Niger</name>
    <name type="synonym">Ramtilla</name>
    <dbReference type="NCBI Taxonomy" id="4230"/>
    <lineage>
        <taxon>Eukaryota</taxon>
        <taxon>Viridiplantae</taxon>
        <taxon>Streptophyta</taxon>
        <taxon>Embryophyta</taxon>
        <taxon>Tracheophyta</taxon>
        <taxon>Spermatophyta</taxon>
        <taxon>Magnoliopsida</taxon>
        <taxon>eudicotyledons</taxon>
        <taxon>Gunneridae</taxon>
        <taxon>Pentapetalae</taxon>
        <taxon>asterids</taxon>
        <taxon>campanulids</taxon>
        <taxon>Asterales</taxon>
        <taxon>Asteraceae</taxon>
        <taxon>Asteroideae</taxon>
        <taxon>Heliantheae alliance</taxon>
        <taxon>Millerieae</taxon>
        <taxon>Guizotia</taxon>
    </lineage>
</organism>
<geneLocation type="chloroplast"/>
<keyword id="KW-0150">Chloroplast</keyword>
<keyword id="KW-0934">Plastid</keyword>
<keyword id="KW-0687">Ribonucleoprotein</keyword>
<keyword id="KW-0689">Ribosomal protein</keyword>